<evidence type="ECO:0000255" key="1">
    <source>
        <dbReference type="HAMAP-Rule" id="MF_00011"/>
    </source>
</evidence>
<name>PURA_CHESB</name>
<sequence length="432" mass="46831">MANVVVVGSQWGDEGKGKIVDWLSERADVVVRYQGGHNAGHTLVIDGVSYKLSLLPSGVVRSGKLSLIGNGVVFDPHAFVAEIERLKGQGISVTPESLKVAENTALILSLHRELDAFREDAASNSGTKIGTTRRGIGPAYEDKVGRRAIRVMDLADPETLSLKVDRLLTHHNALRRGLGHAEVSHEAIMQELTSVADKILPFVDRVWKILEDARRAGSRILFEGAQGTMLDIDHGTYPFVTSSNTVAGQAATGSGLGPGAVGYVLGITKAYTTRVGEGPFPTEQDNEIGEFLGNRGHEFGTVTGRKRRCGWFDAVQVRQSVVTNGMSGIALTKLDVLDGMEEIKVCTGYRLDGQVIDYLPASQGAQARLDPIYETLEGWKETTRGARKWNDLPAQAVKYVRHIEELIGAPVAILSTSPEREDAILVKDPFQD</sequence>
<comment type="function">
    <text evidence="1">Plays an important role in the de novo pathway of purine nucleotide biosynthesis. Catalyzes the first committed step in the biosynthesis of AMP from IMP.</text>
</comment>
<comment type="catalytic activity">
    <reaction evidence="1">
        <text>IMP + L-aspartate + GTP = N(6)-(1,2-dicarboxyethyl)-AMP + GDP + phosphate + 2 H(+)</text>
        <dbReference type="Rhea" id="RHEA:15753"/>
        <dbReference type="ChEBI" id="CHEBI:15378"/>
        <dbReference type="ChEBI" id="CHEBI:29991"/>
        <dbReference type="ChEBI" id="CHEBI:37565"/>
        <dbReference type="ChEBI" id="CHEBI:43474"/>
        <dbReference type="ChEBI" id="CHEBI:57567"/>
        <dbReference type="ChEBI" id="CHEBI:58053"/>
        <dbReference type="ChEBI" id="CHEBI:58189"/>
        <dbReference type="EC" id="6.3.4.4"/>
    </reaction>
</comment>
<comment type="cofactor">
    <cofactor evidence="1">
        <name>Mg(2+)</name>
        <dbReference type="ChEBI" id="CHEBI:18420"/>
    </cofactor>
    <text evidence="1">Binds 1 Mg(2+) ion per subunit.</text>
</comment>
<comment type="pathway">
    <text evidence="1">Purine metabolism; AMP biosynthesis via de novo pathway; AMP from IMP: step 1/2.</text>
</comment>
<comment type="subunit">
    <text evidence="1">Homodimer.</text>
</comment>
<comment type="subcellular location">
    <subcellularLocation>
        <location evidence="1">Cytoplasm</location>
    </subcellularLocation>
</comment>
<comment type="similarity">
    <text evidence="1">Belongs to the adenylosuccinate synthetase family.</text>
</comment>
<feature type="chain" id="PRO_1000000855" description="Adenylosuccinate synthetase">
    <location>
        <begin position="1"/>
        <end position="432"/>
    </location>
</feature>
<feature type="active site" description="Proton acceptor" evidence="1">
    <location>
        <position position="13"/>
    </location>
</feature>
<feature type="active site" description="Proton donor" evidence="1">
    <location>
        <position position="41"/>
    </location>
</feature>
<feature type="binding site" evidence="1">
    <location>
        <begin position="12"/>
        <end position="18"/>
    </location>
    <ligand>
        <name>GTP</name>
        <dbReference type="ChEBI" id="CHEBI:37565"/>
    </ligand>
</feature>
<feature type="binding site" description="in other chain" evidence="1">
    <location>
        <begin position="13"/>
        <end position="16"/>
    </location>
    <ligand>
        <name>IMP</name>
        <dbReference type="ChEBI" id="CHEBI:58053"/>
        <note>ligand shared between dimeric partners</note>
    </ligand>
</feature>
<feature type="binding site" evidence="1">
    <location>
        <position position="13"/>
    </location>
    <ligand>
        <name>Mg(2+)</name>
        <dbReference type="ChEBI" id="CHEBI:18420"/>
    </ligand>
</feature>
<feature type="binding site" description="in other chain" evidence="1">
    <location>
        <begin position="38"/>
        <end position="41"/>
    </location>
    <ligand>
        <name>IMP</name>
        <dbReference type="ChEBI" id="CHEBI:58053"/>
        <note>ligand shared between dimeric partners</note>
    </ligand>
</feature>
<feature type="binding site" evidence="1">
    <location>
        <begin position="40"/>
        <end position="42"/>
    </location>
    <ligand>
        <name>GTP</name>
        <dbReference type="ChEBI" id="CHEBI:37565"/>
    </ligand>
</feature>
<feature type="binding site" evidence="1">
    <location>
        <position position="40"/>
    </location>
    <ligand>
        <name>Mg(2+)</name>
        <dbReference type="ChEBI" id="CHEBI:18420"/>
    </ligand>
</feature>
<feature type="binding site" description="in other chain" evidence="1">
    <location>
        <position position="132"/>
    </location>
    <ligand>
        <name>IMP</name>
        <dbReference type="ChEBI" id="CHEBI:58053"/>
        <note>ligand shared between dimeric partners</note>
    </ligand>
</feature>
<feature type="binding site" evidence="1">
    <location>
        <position position="146"/>
    </location>
    <ligand>
        <name>IMP</name>
        <dbReference type="ChEBI" id="CHEBI:58053"/>
        <note>ligand shared between dimeric partners</note>
    </ligand>
</feature>
<feature type="binding site" description="in other chain" evidence="1">
    <location>
        <position position="226"/>
    </location>
    <ligand>
        <name>IMP</name>
        <dbReference type="ChEBI" id="CHEBI:58053"/>
        <note>ligand shared between dimeric partners</note>
    </ligand>
</feature>
<feature type="binding site" description="in other chain" evidence="1">
    <location>
        <position position="241"/>
    </location>
    <ligand>
        <name>IMP</name>
        <dbReference type="ChEBI" id="CHEBI:58053"/>
        <note>ligand shared between dimeric partners</note>
    </ligand>
</feature>
<feature type="binding site" evidence="1">
    <location>
        <begin position="301"/>
        <end position="307"/>
    </location>
    <ligand>
        <name>substrate</name>
    </ligand>
</feature>
<feature type="binding site" description="in other chain" evidence="1">
    <location>
        <position position="305"/>
    </location>
    <ligand>
        <name>IMP</name>
        <dbReference type="ChEBI" id="CHEBI:58053"/>
        <note>ligand shared between dimeric partners</note>
    </ligand>
</feature>
<feature type="binding site" evidence="1">
    <location>
        <position position="307"/>
    </location>
    <ligand>
        <name>GTP</name>
        <dbReference type="ChEBI" id="CHEBI:37565"/>
    </ligand>
</feature>
<feature type="binding site" evidence="1">
    <location>
        <begin position="333"/>
        <end position="335"/>
    </location>
    <ligand>
        <name>GTP</name>
        <dbReference type="ChEBI" id="CHEBI:37565"/>
    </ligand>
</feature>
<feature type="binding site" evidence="1">
    <location>
        <begin position="415"/>
        <end position="417"/>
    </location>
    <ligand>
        <name>GTP</name>
        <dbReference type="ChEBI" id="CHEBI:37565"/>
    </ligand>
</feature>
<keyword id="KW-0963">Cytoplasm</keyword>
<keyword id="KW-0342">GTP-binding</keyword>
<keyword id="KW-0436">Ligase</keyword>
<keyword id="KW-0460">Magnesium</keyword>
<keyword id="KW-0479">Metal-binding</keyword>
<keyword id="KW-0547">Nucleotide-binding</keyword>
<keyword id="KW-0658">Purine biosynthesis</keyword>
<gene>
    <name evidence="1" type="primary">purA</name>
    <name type="ordered locus">Meso_3159</name>
</gene>
<organism>
    <name type="scientific">Chelativorans sp. (strain BNC1)</name>
    <dbReference type="NCBI Taxonomy" id="266779"/>
    <lineage>
        <taxon>Bacteria</taxon>
        <taxon>Pseudomonadati</taxon>
        <taxon>Pseudomonadota</taxon>
        <taxon>Alphaproteobacteria</taxon>
        <taxon>Hyphomicrobiales</taxon>
        <taxon>Phyllobacteriaceae</taxon>
        <taxon>Chelativorans</taxon>
    </lineage>
</organism>
<reference key="1">
    <citation type="submission" date="2006-06" db="EMBL/GenBank/DDBJ databases">
        <title>Complete sequence of chromosome of Mesorhizobium sp. BNC1.</title>
        <authorList>
            <consortium name="US DOE Joint Genome Institute"/>
            <person name="Copeland A."/>
            <person name="Lucas S."/>
            <person name="Lapidus A."/>
            <person name="Barry K."/>
            <person name="Detter J.C."/>
            <person name="Glavina del Rio T."/>
            <person name="Hammon N."/>
            <person name="Israni S."/>
            <person name="Dalin E."/>
            <person name="Tice H."/>
            <person name="Pitluck S."/>
            <person name="Chertkov O."/>
            <person name="Brettin T."/>
            <person name="Bruce D."/>
            <person name="Han C."/>
            <person name="Tapia R."/>
            <person name="Gilna P."/>
            <person name="Schmutz J."/>
            <person name="Larimer F."/>
            <person name="Land M."/>
            <person name="Hauser L."/>
            <person name="Kyrpides N."/>
            <person name="Mikhailova N."/>
            <person name="Richardson P."/>
        </authorList>
    </citation>
    <scope>NUCLEOTIDE SEQUENCE [LARGE SCALE GENOMIC DNA]</scope>
    <source>
        <strain>BNC1</strain>
    </source>
</reference>
<accession>Q11DJ4</accession>
<protein>
    <recommendedName>
        <fullName evidence="1">Adenylosuccinate synthetase</fullName>
        <shortName evidence="1">AMPSase</shortName>
        <shortName evidence="1">AdSS</shortName>
        <ecNumber evidence="1">6.3.4.4</ecNumber>
    </recommendedName>
    <alternativeName>
        <fullName evidence="1">IMP--aspartate ligase</fullName>
    </alternativeName>
</protein>
<dbReference type="EC" id="6.3.4.4" evidence="1"/>
<dbReference type="EMBL" id="CP000390">
    <property type="protein sequence ID" value="ABG64531.1"/>
    <property type="molecule type" value="Genomic_DNA"/>
</dbReference>
<dbReference type="SMR" id="Q11DJ4"/>
<dbReference type="STRING" id="266779.Meso_3159"/>
<dbReference type="KEGG" id="mes:Meso_3159"/>
<dbReference type="eggNOG" id="COG0104">
    <property type="taxonomic scope" value="Bacteria"/>
</dbReference>
<dbReference type="HOGENOM" id="CLU_029848_0_0_5"/>
<dbReference type="OrthoDB" id="9807553at2"/>
<dbReference type="UniPathway" id="UPA00075">
    <property type="reaction ID" value="UER00335"/>
</dbReference>
<dbReference type="GO" id="GO:0005737">
    <property type="term" value="C:cytoplasm"/>
    <property type="evidence" value="ECO:0007669"/>
    <property type="project" value="UniProtKB-SubCell"/>
</dbReference>
<dbReference type="GO" id="GO:0004019">
    <property type="term" value="F:adenylosuccinate synthase activity"/>
    <property type="evidence" value="ECO:0007669"/>
    <property type="project" value="UniProtKB-UniRule"/>
</dbReference>
<dbReference type="GO" id="GO:0005525">
    <property type="term" value="F:GTP binding"/>
    <property type="evidence" value="ECO:0007669"/>
    <property type="project" value="UniProtKB-UniRule"/>
</dbReference>
<dbReference type="GO" id="GO:0000287">
    <property type="term" value="F:magnesium ion binding"/>
    <property type="evidence" value="ECO:0007669"/>
    <property type="project" value="UniProtKB-UniRule"/>
</dbReference>
<dbReference type="GO" id="GO:0044208">
    <property type="term" value="P:'de novo' AMP biosynthetic process"/>
    <property type="evidence" value="ECO:0007669"/>
    <property type="project" value="UniProtKB-UniRule"/>
</dbReference>
<dbReference type="GO" id="GO:0046040">
    <property type="term" value="P:IMP metabolic process"/>
    <property type="evidence" value="ECO:0007669"/>
    <property type="project" value="TreeGrafter"/>
</dbReference>
<dbReference type="CDD" id="cd03108">
    <property type="entry name" value="AdSS"/>
    <property type="match status" value="1"/>
</dbReference>
<dbReference type="FunFam" id="1.10.300.10:FF:000001">
    <property type="entry name" value="Adenylosuccinate synthetase"/>
    <property type="match status" value="1"/>
</dbReference>
<dbReference type="FunFam" id="3.90.170.10:FF:000001">
    <property type="entry name" value="Adenylosuccinate synthetase"/>
    <property type="match status" value="1"/>
</dbReference>
<dbReference type="Gene3D" id="3.40.440.10">
    <property type="entry name" value="Adenylosuccinate Synthetase, subunit A, domain 1"/>
    <property type="match status" value="1"/>
</dbReference>
<dbReference type="Gene3D" id="1.10.300.10">
    <property type="entry name" value="Adenylosuccinate Synthetase, subunit A, domain 2"/>
    <property type="match status" value="1"/>
</dbReference>
<dbReference type="Gene3D" id="3.90.170.10">
    <property type="entry name" value="Adenylosuccinate Synthetase, subunit A, domain 3"/>
    <property type="match status" value="1"/>
</dbReference>
<dbReference type="HAMAP" id="MF_00011">
    <property type="entry name" value="Adenylosucc_synth"/>
    <property type="match status" value="1"/>
</dbReference>
<dbReference type="InterPro" id="IPR018220">
    <property type="entry name" value="Adenylosuccin_syn_GTP-bd"/>
</dbReference>
<dbReference type="InterPro" id="IPR033128">
    <property type="entry name" value="Adenylosuccin_syn_Lys_AS"/>
</dbReference>
<dbReference type="InterPro" id="IPR042109">
    <property type="entry name" value="Adenylosuccinate_synth_dom1"/>
</dbReference>
<dbReference type="InterPro" id="IPR042110">
    <property type="entry name" value="Adenylosuccinate_synth_dom2"/>
</dbReference>
<dbReference type="InterPro" id="IPR042111">
    <property type="entry name" value="Adenylosuccinate_synth_dom3"/>
</dbReference>
<dbReference type="InterPro" id="IPR001114">
    <property type="entry name" value="Adenylosuccinate_synthetase"/>
</dbReference>
<dbReference type="InterPro" id="IPR027417">
    <property type="entry name" value="P-loop_NTPase"/>
</dbReference>
<dbReference type="NCBIfam" id="NF002223">
    <property type="entry name" value="PRK01117.1"/>
    <property type="match status" value="1"/>
</dbReference>
<dbReference type="NCBIfam" id="TIGR00184">
    <property type="entry name" value="purA"/>
    <property type="match status" value="1"/>
</dbReference>
<dbReference type="PANTHER" id="PTHR11846">
    <property type="entry name" value="ADENYLOSUCCINATE SYNTHETASE"/>
    <property type="match status" value="1"/>
</dbReference>
<dbReference type="PANTHER" id="PTHR11846:SF0">
    <property type="entry name" value="ADENYLOSUCCINATE SYNTHETASE"/>
    <property type="match status" value="1"/>
</dbReference>
<dbReference type="Pfam" id="PF00709">
    <property type="entry name" value="Adenylsucc_synt"/>
    <property type="match status" value="1"/>
</dbReference>
<dbReference type="SMART" id="SM00788">
    <property type="entry name" value="Adenylsucc_synt"/>
    <property type="match status" value="1"/>
</dbReference>
<dbReference type="SUPFAM" id="SSF52540">
    <property type="entry name" value="P-loop containing nucleoside triphosphate hydrolases"/>
    <property type="match status" value="1"/>
</dbReference>
<dbReference type="PROSITE" id="PS01266">
    <property type="entry name" value="ADENYLOSUCCIN_SYN_1"/>
    <property type="match status" value="1"/>
</dbReference>
<dbReference type="PROSITE" id="PS00513">
    <property type="entry name" value="ADENYLOSUCCIN_SYN_2"/>
    <property type="match status" value="1"/>
</dbReference>
<proteinExistence type="inferred from homology"/>